<accession>P0AEZ9</accession>
<accession>P30746</accession>
<name>MOAB_ECOLI</name>
<sequence length="170" mass="18665">MSQVSTEFIPTRIAILTVSNRRGEEDDTSGHYLRDSAQEAGHHVVDKAIVKENRYAIRAQVSAWIASDDVQVVLITGGTGLTEGDQAPEALLPLFDREVEGFGEVFRMLSFEEIGTSTLQSRAVAGVANKTLIFAMPGSTKACRTAWENIIAPQLDARTRPCNFHPHLKK</sequence>
<reference key="1">
    <citation type="journal article" date="1993" name="Mol. Microbiol.">
        <title>Molecular genetic analysis of the moa operon of Escherichia coli K-12 required for molybdenum cofactor biosynthesis.</title>
        <authorList>
            <person name="Rivers S.L."/>
            <person name="McNairn E."/>
            <person name="Blasco F."/>
            <person name="Giordano G."/>
            <person name="Boxer D.H."/>
        </authorList>
    </citation>
    <scope>NUCLEOTIDE SEQUENCE [GENOMIC DNA]</scope>
    <scope>PROTEIN SEQUENCE OF 2-11</scope>
    <source>
        <strain>K12 / MC4100 / ATCC 35695 / DSM 6574</strain>
    </source>
</reference>
<reference key="2">
    <citation type="journal article" date="1996" name="DNA Res.">
        <title>A 718-kb DNA sequence of the Escherichia coli K-12 genome corresponding to the 12.7-28.0 min region on the linkage map.</title>
        <authorList>
            <person name="Oshima T."/>
            <person name="Aiba H."/>
            <person name="Baba T."/>
            <person name="Fujita K."/>
            <person name="Hayashi K."/>
            <person name="Honjo A."/>
            <person name="Ikemoto K."/>
            <person name="Inada T."/>
            <person name="Itoh T."/>
            <person name="Kajihara M."/>
            <person name="Kanai K."/>
            <person name="Kashimoto K."/>
            <person name="Kimura S."/>
            <person name="Kitagawa M."/>
            <person name="Makino K."/>
            <person name="Masuda S."/>
            <person name="Miki T."/>
            <person name="Mizobuchi K."/>
            <person name="Mori H."/>
            <person name="Motomura K."/>
            <person name="Nakamura Y."/>
            <person name="Nashimoto H."/>
            <person name="Nishio Y."/>
            <person name="Saito N."/>
            <person name="Sampei G."/>
            <person name="Seki Y."/>
            <person name="Tagami H."/>
            <person name="Takemoto K."/>
            <person name="Wada C."/>
            <person name="Yamamoto Y."/>
            <person name="Yano M."/>
            <person name="Horiuchi T."/>
        </authorList>
    </citation>
    <scope>NUCLEOTIDE SEQUENCE [LARGE SCALE GENOMIC DNA]</scope>
    <source>
        <strain>K12 / W3110 / ATCC 27325 / DSM 5911</strain>
    </source>
</reference>
<reference key="3">
    <citation type="journal article" date="1997" name="Science">
        <title>The complete genome sequence of Escherichia coli K-12.</title>
        <authorList>
            <person name="Blattner F.R."/>
            <person name="Plunkett G. III"/>
            <person name="Bloch C.A."/>
            <person name="Perna N.T."/>
            <person name="Burland V."/>
            <person name="Riley M."/>
            <person name="Collado-Vides J."/>
            <person name="Glasner J.D."/>
            <person name="Rode C.K."/>
            <person name="Mayhew G.F."/>
            <person name="Gregor J."/>
            <person name="Davis N.W."/>
            <person name="Kirkpatrick H.A."/>
            <person name="Goeden M.A."/>
            <person name="Rose D.J."/>
            <person name="Mau B."/>
            <person name="Shao Y."/>
        </authorList>
    </citation>
    <scope>NUCLEOTIDE SEQUENCE [LARGE SCALE GENOMIC DNA]</scope>
    <source>
        <strain>K12 / MG1655 / ATCC 47076</strain>
    </source>
</reference>
<reference key="4">
    <citation type="journal article" date="2006" name="Mol. Syst. Biol.">
        <title>Highly accurate genome sequences of Escherichia coli K-12 strains MG1655 and W3110.</title>
        <authorList>
            <person name="Hayashi K."/>
            <person name="Morooka N."/>
            <person name="Yamamoto Y."/>
            <person name="Fujita K."/>
            <person name="Isono K."/>
            <person name="Choi S."/>
            <person name="Ohtsubo E."/>
            <person name="Baba T."/>
            <person name="Wanner B.L."/>
            <person name="Mori H."/>
            <person name="Horiuchi T."/>
        </authorList>
    </citation>
    <scope>NUCLEOTIDE SEQUENCE [LARGE SCALE GENOMIC DNA]</scope>
    <source>
        <strain>K12 / W3110 / ATCC 27325 / DSM 5911</strain>
    </source>
</reference>
<reference key="5">
    <citation type="journal article" date="2008" name="Biochemistry">
        <title>Function of MoaB proteins in the biosynthesis of the molybdenum and tungsten cofactors.</title>
        <authorList>
            <person name="Bevers L.E."/>
            <person name="Hagedoorn P.L."/>
            <person name="Santamaria-Araujo J.A."/>
            <person name="Magalon A."/>
            <person name="Hagen W.R."/>
            <person name="Schwarz G."/>
        </authorList>
    </citation>
    <scope>BINDING OF MPT</scope>
    <scope>LACK OF FUNCTION AS MPT ADENYLYLTRANSFERASE</scope>
</reference>
<reference key="6">
    <citation type="journal article" date="2004" name="Acta Crystallogr. D">
        <title>Structure of the molybdenum-cofactor biosynthesis protein MoaB of Escherichia coli.</title>
        <authorList>
            <person name="Bader G."/>
            <person name="Gomez-Ortiz M."/>
            <person name="Haussmann C."/>
            <person name="Bacher A."/>
            <person name="Huber R."/>
            <person name="Fischer M."/>
        </authorList>
    </citation>
    <scope>X-RAY CRYSTALLOGRAPHY (2.1 ANGSTROMS)</scope>
</reference>
<reference key="7">
    <citation type="journal article" date="2004" name="J. Biol. Chem.">
        <title>The crystal structure of Escherichia coli MoaB suggests a probable role in molybdenum cofactor synthesis.</title>
        <authorList>
            <person name="Sanishvili R."/>
            <person name="Beasley S."/>
            <person name="Skarina T."/>
            <person name="Glesne D."/>
            <person name="Joachimiak A."/>
            <person name="Edwards A."/>
            <person name="Savchenko A."/>
        </authorList>
    </citation>
    <scope>X-RAY CRYSTALLOGRAPHY (1.6 ANGSTROMS)</scope>
    <scope>GTP BINDING</scope>
    <scope>SUBUNIT</scope>
</reference>
<proteinExistence type="evidence at protein level"/>
<organism>
    <name type="scientific">Escherichia coli (strain K12)</name>
    <dbReference type="NCBI Taxonomy" id="83333"/>
    <lineage>
        <taxon>Bacteria</taxon>
        <taxon>Pseudomonadati</taxon>
        <taxon>Pseudomonadota</taxon>
        <taxon>Gammaproteobacteria</taxon>
        <taxon>Enterobacterales</taxon>
        <taxon>Enterobacteriaceae</taxon>
        <taxon>Escherichia</taxon>
    </lineage>
</organism>
<feature type="initiator methionine" description="Removed" evidence="2">
    <location>
        <position position="1"/>
    </location>
</feature>
<feature type="chain" id="PRO_0000170970" description="Molybdenum cofactor biosynthesis protein B">
    <location>
        <begin position="2"/>
        <end position="170"/>
    </location>
</feature>
<feature type="binding site" evidence="3">
    <location>
        <position position="110"/>
    </location>
    <ligand>
        <name>GTP</name>
        <dbReference type="ChEBI" id="CHEBI:37565"/>
    </ligand>
</feature>
<feature type="strand" evidence="4">
    <location>
        <begin position="12"/>
        <end position="18"/>
    </location>
</feature>
<feature type="helix" evidence="4">
    <location>
        <begin position="24"/>
        <end position="26"/>
    </location>
</feature>
<feature type="helix" evidence="4">
    <location>
        <begin position="28"/>
        <end position="39"/>
    </location>
</feature>
<feature type="strand" evidence="4">
    <location>
        <begin position="43"/>
        <end position="50"/>
    </location>
</feature>
<feature type="helix" evidence="4">
    <location>
        <begin position="54"/>
        <end position="66"/>
    </location>
</feature>
<feature type="strand" evidence="4">
    <location>
        <begin position="67"/>
        <end position="69"/>
    </location>
</feature>
<feature type="strand" evidence="4">
    <location>
        <begin position="72"/>
        <end position="77"/>
    </location>
</feature>
<feature type="strand" evidence="4">
    <location>
        <begin position="80"/>
        <end position="82"/>
    </location>
</feature>
<feature type="helix" evidence="4">
    <location>
        <begin position="87"/>
        <end position="91"/>
    </location>
</feature>
<feature type="helix" evidence="4">
    <location>
        <begin position="92"/>
        <end position="94"/>
    </location>
</feature>
<feature type="strand" evidence="4">
    <location>
        <begin position="96"/>
        <end position="98"/>
    </location>
</feature>
<feature type="helix" evidence="4">
    <location>
        <begin position="100"/>
        <end position="114"/>
    </location>
</feature>
<feature type="helix" evidence="4">
    <location>
        <begin position="115"/>
        <end position="120"/>
    </location>
</feature>
<feature type="strand" evidence="4">
    <location>
        <begin position="124"/>
        <end position="128"/>
    </location>
</feature>
<feature type="strand" evidence="4">
    <location>
        <begin position="131"/>
        <end position="136"/>
    </location>
</feature>
<feature type="helix" evidence="4">
    <location>
        <begin position="140"/>
        <end position="149"/>
    </location>
</feature>
<feature type="helix" evidence="4">
    <location>
        <begin position="151"/>
        <end position="155"/>
    </location>
</feature>
<feature type="helix" evidence="4">
    <location>
        <begin position="165"/>
        <end position="167"/>
    </location>
</feature>
<evidence type="ECO:0000269" key="1">
    <source>
    </source>
</evidence>
<evidence type="ECO:0000269" key="2">
    <source>
    </source>
</evidence>
<evidence type="ECO:0000305" key="3"/>
<evidence type="ECO:0007829" key="4">
    <source>
        <dbReference type="PDB" id="1MKZ"/>
    </source>
</evidence>
<comment type="function">
    <text>May be involved in the biosynthesis of molybdopterin. Can bind GTP and has low GTPase activity. Can bind MPT, but has no MPT adenylyl transferase activity.</text>
</comment>
<comment type="pathway">
    <text>Cofactor biosynthesis; molybdopterin biosynthesis.</text>
</comment>
<comment type="subunit">
    <text evidence="1">Homohexamer. Dimer of trimers.</text>
</comment>
<comment type="induction">
    <text>By anaerobiosis, repressed by the molybdenum cofactor.</text>
</comment>
<comment type="similarity">
    <text evidence="3">Belongs to the MoaB/Mog family.</text>
</comment>
<keyword id="KW-0002">3D-structure</keyword>
<keyword id="KW-0903">Direct protein sequencing</keyword>
<keyword id="KW-0342">GTP-binding</keyword>
<keyword id="KW-0501">Molybdenum cofactor biosynthesis</keyword>
<keyword id="KW-0547">Nucleotide-binding</keyword>
<keyword id="KW-1185">Reference proteome</keyword>
<gene>
    <name type="primary">moaB</name>
    <name type="synonym">chlA2</name>
    <name type="ordered locus">b0782</name>
    <name type="ordered locus">JW0765</name>
</gene>
<dbReference type="EMBL" id="X70420">
    <property type="protein sequence ID" value="CAA49862.1"/>
    <property type="molecule type" value="Genomic_DNA"/>
</dbReference>
<dbReference type="EMBL" id="U00096">
    <property type="protein sequence ID" value="AAC73869.1"/>
    <property type="molecule type" value="Genomic_DNA"/>
</dbReference>
<dbReference type="EMBL" id="AP009048">
    <property type="protein sequence ID" value="BAA35440.1"/>
    <property type="molecule type" value="Genomic_DNA"/>
</dbReference>
<dbReference type="PIR" id="S34999">
    <property type="entry name" value="S31880"/>
</dbReference>
<dbReference type="RefSeq" id="NP_415303.1">
    <property type="nucleotide sequence ID" value="NC_000913.3"/>
</dbReference>
<dbReference type="RefSeq" id="WP_000084639.1">
    <property type="nucleotide sequence ID" value="NZ_SSZK01000002.1"/>
</dbReference>
<dbReference type="PDB" id="1MKZ">
    <property type="method" value="X-ray"/>
    <property type="resolution" value="1.60 A"/>
    <property type="chains" value="A/B=1-170"/>
</dbReference>
<dbReference type="PDB" id="1R2K">
    <property type="method" value="X-ray"/>
    <property type="resolution" value="2.10 A"/>
    <property type="chains" value="A/B=2-170"/>
</dbReference>
<dbReference type="PDBsum" id="1MKZ"/>
<dbReference type="PDBsum" id="1R2K"/>
<dbReference type="SMR" id="P0AEZ9"/>
<dbReference type="BioGRID" id="4259950">
    <property type="interactions" value="27"/>
</dbReference>
<dbReference type="FunCoup" id="P0AEZ9">
    <property type="interactions" value="444"/>
</dbReference>
<dbReference type="IntAct" id="P0AEZ9">
    <property type="interactions" value="4"/>
</dbReference>
<dbReference type="STRING" id="511145.b0782"/>
<dbReference type="jPOST" id="P0AEZ9"/>
<dbReference type="PaxDb" id="511145-b0782"/>
<dbReference type="EnsemblBacteria" id="AAC73869">
    <property type="protein sequence ID" value="AAC73869"/>
    <property type="gene ID" value="b0782"/>
</dbReference>
<dbReference type="GeneID" id="93776648"/>
<dbReference type="GeneID" id="945396"/>
<dbReference type="KEGG" id="ecj:JW0765"/>
<dbReference type="KEGG" id="eco:b0782"/>
<dbReference type="KEGG" id="ecoc:C3026_04960"/>
<dbReference type="PATRIC" id="fig|1411691.4.peg.1496"/>
<dbReference type="EchoBASE" id="EB1553"/>
<dbReference type="eggNOG" id="COG0521">
    <property type="taxonomic scope" value="Bacteria"/>
</dbReference>
<dbReference type="HOGENOM" id="CLU_077358_2_2_6"/>
<dbReference type="InParanoid" id="P0AEZ9"/>
<dbReference type="OMA" id="TGWDGIL"/>
<dbReference type="OrthoDB" id="9784492at2"/>
<dbReference type="PhylomeDB" id="P0AEZ9"/>
<dbReference type="BioCyc" id="EcoCyc:MONOMER0-1501"/>
<dbReference type="UniPathway" id="UPA00344"/>
<dbReference type="EvolutionaryTrace" id="P0AEZ9"/>
<dbReference type="PRO" id="PR:P0AEZ9"/>
<dbReference type="Proteomes" id="UP000000625">
    <property type="component" value="Chromosome"/>
</dbReference>
<dbReference type="GO" id="GO:0005829">
    <property type="term" value="C:cytosol"/>
    <property type="evidence" value="ECO:0000314"/>
    <property type="project" value="EcoCyc"/>
</dbReference>
<dbReference type="GO" id="GO:0005525">
    <property type="term" value="F:GTP binding"/>
    <property type="evidence" value="ECO:0007669"/>
    <property type="project" value="UniProtKB-KW"/>
</dbReference>
<dbReference type="GO" id="GO:0042802">
    <property type="term" value="F:identical protein binding"/>
    <property type="evidence" value="ECO:0000314"/>
    <property type="project" value="EcoCyc"/>
</dbReference>
<dbReference type="GO" id="GO:0006777">
    <property type="term" value="P:Mo-molybdopterin cofactor biosynthetic process"/>
    <property type="evidence" value="ECO:0007669"/>
    <property type="project" value="UniProtKB-KW"/>
</dbReference>
<dbReference type="GO" id="GO:0034214">
    <property type="term" value="P:protein hexamerization"/>
    <property type="evidence" value="ECO:0000314"/>
    <property type="project" value="EcoCyc"/>
</dbReference>
<dbReference type="CDD" id="cd00886">
    <property type="entry name" value="MogA_MoaB"/>
    <property type="match status" value="1"/>
</dbReference>
<dbReference type="FunFam" id="3.40.980.10:FF:000003">
    <property type="entry name" value="Molybdenum cofactor biosynthesis protein B"/>
    <property type="match status" value="1"/>
</dbReference>
<dbReference type="Gene3D" id="3.40.980.10">
    <property type="entry name" value="MoaB/Mog-like domain"/>
    <property type="match status" value="1"/>
</dbReference>
<dbReference type="InterPro" id="IPR012245">
    <property type="entry name" value="MoaB"/>
</dbReference>
<dbReference type="InterPro" id="IPR036425">
    <property type="entry name" value="MoaB/Mog-like_dom_sf"/>
</dbReference>
<dbReference type="InterPro" id="IPR001453">
    <property type="entry name" value="MoaB/Mog_dom"/>
</dbReference>
<dbReference type="InterPro" id="IPR013484">
    <property type="entry name" value="MoaB_proteobac"/>
</dbReference>
<dbReference type="InterPro" id="IPR008284">
    <property type="entry name" value="MoCF_biosynth_CS"/>
</dbReference>
<dbReference type="NCBIfam" id="TIGR02667">
    <property type="entry name" value="moaB_proteo"/>
    <property type="match status" value="1"/>
</dbReference>
<dbReference type="NCBIfam" id="TIGR00177">
    <property type="entry name" value="molyb_syn"/>
    <property type="match status" value="1"/>
</dbReference>
<dbReference type="PANTHER" id="PTHR43232">
    <property type="entry name" value="MOLYBDENUM COFACTOR BIOSYNTHESIS PROTEIN B"/>
    <property type="match status" value="1"/>
</dbReference>
<dbReference type="PANTHER" id="PTHR43232:SF2">
    <property type="entry name" value="MOLYBDENUM COFACTOR BIOSYNTHESIS PROTEIN B"/>
    <property type="match status" value="1"/>
</dbReference>
<dbReference type="Pfam" id="PF00994">
    <property type="entry name" value="MoCF_biosynth"/>
    <property type="match status" value="1"/>
</dbReference>
<dbReference type="PIRSF" id="PIRSF006443">
    <property type="entry name" value="MoaB"/>
    <property type="match status" value="1"/>
</dbReference>
<dbReference type="SMART" id="SM00852">
    <property type="entry name" value="MoCF_biosynth"/>
    <property type="match status" value="1"/>
</dbReference>
<dbReference type="SUPFAM" id="SSF53218">
    <property type="entry name" value="Molybdenum cofactor biosynthesis proteins"/>
    <property type="match status" value="1"/>
</dbReference>
<dbReference type="PROSITE" id="PS01078">
    <property type="entry name" value="MOCF_BIOSYNTHESIS_1"/>
    <property type="match status" value="1"/>
</dbReference>
<protein>
    <recommendedName>
        <fullName>Molybdenum cofactor biosynthesis protein B</fullName>
    </recommendedName>
</protein>